<evidence type="ECO:0000255" key="1">
    <source>
        <dbReference type="HAMAP-Rule" id="MF_01576"/>
    </source>
</evidence>
<dbReference type="EC" id="1.5.1.5" evidence="1"/>
<dbReference type="EC" id="3.5.4.9" evidence="1"/>
<dbReference type="EMBL" id="CP000386">
    <property type="protein sequence ID" value="ABG05437.1"/>
    <property type="molecule type" value="Genomic_DNA"/>
</dbReference>
<dbReference type="RefSeq" id="WP_011565448.1">
    <property type="nucleotide sequence ID" value="NC_008148.1"/>
</dbReference>
<dbReference type="SMR" id="Q1AT41"/>
<dbReference type="STRING" id="266117.Rxyl_2517"/>
<dbReference type="KEGG" id="rxy:Rxyl_2517"/>
<dbReference type="eggNOG" id="COG0190">
    <property type="taxonomic scope" value="Bacteria"/>
</dbReference>
<dbReference type="HOGENOM" id="CLU_034045_2_1_11"/>
<dbReference type="OrthoDB" id="9803580at2"/>
<dbReference type="PhylomeDB" id="Q1AT41"/>
<dbReference type="UniPathway" id="UPA00193"/>
<dbReference type="Proteomes" id="UP000006637">
    <property type="component" value="Chromosome"/>
</dbReference>
<dbReference type="GO" id="GO:0005829">
    <property type="term" value="C:cytosol"/>
    <property type="evidence" value="ECO:0007669"/>
    <property type="project" value="TreeGrafter"/>
</dbReference>
<dbReference type="GO" id="GO:0004477">
    <property type="term" value="F:methenyltetrahydrofolate cyclohydrolase activity"/>
    <property type="evidence" value="ECO:0007669"/>
    <property type="project" value="UniProtKB-UniRule"/>
</dbReference>
<dbReference type="GO" id="GO:0004488">
    <property type="term" value="F:methylenetetrahydrofolate dehydrogenase (NADP+) activity"/>
    <property type="evidence" value="ECO:0007669"/>
    <property type="project" value="UniProtKB-UniRule"/>
</dbReference>
<dbReference type="GO" id="GO:0000105">
    <property type="term" value="P:L-histidine biosynthetic process"/>
    <property type="evidence" value="ECO:0007669"/>
    <property type="project" value="UniProtKB-KW"/>
</dbReference>
<dbReference type="GO" id="GO:0009086">
    <property type="term" value="P:methionine biosynthetic process"/>
    <property type="evidence" value="ECO:0007669"/>
    <property type="project" value="UniProtKB-KW"/>
</dbReference>
<dbReference type="GO" id="GO:0006164">
    <property type="term" value="P:purine nucleotide biosynthetic process"/>
    <property type="evidence" value="ECO:0007669"/>
    <property type="project" value="UniProtKB-KW"/>
</dbReference>
<dbReference type="GO" id="GO:0035999">
    <property type="term" value="P:tetrahydrofolate interconversion"/>
    <property type="evidence" value="ECO:0007669"/>
    <property type="project" value="UniProtKB-UniRule"/>
</dbReference>
<dbReference type="CDD" id="cd01080">
    <property type="entry name" value="NAD_bind_m-THF_DH_Cyclohyd"/>
    <property type="match status" value="1"/>
</dbReference>
<dbReference type="Gene3D" id="3.40.50.10860">
    <property type="entry name" value="Leucine Dehydrogenase, chain A, domain 1"/>
    <property type="match status" value="1"/>
</dbReference>
<dbReference type="Gene3D" id="3.40.50.720">
    <property type="entry name" value="NAD(P)-binding Rossmann-like Domain"/>
    <property type="match status" value="1"/>
</dbReference>
<dbReference type="HAMAP" id="MF_01576">
    <property type="entry name" value="THF_DHG_CYH"/>
    <property type="match status" value="1"/>
</dbReference>
<dbReference type="InterPro" id="IPR046346">
    <property type="entry name" value="Aminoacid_DH-like_N_sf"/>
</dbReference>
<dbReference type="InterPro" id="IPR036291">
    <property type="entry name" value="NAD(P)-bd_dom_sf"/>
</dbReference>
<dbReference type="InterPro" id="IPR000672">
    <property type="entry name" value="THF_DH/CycHdrlase"/>
</dbReference>
<dbReference type="InterPro" id="IPR020630">
    <property type="entry name" value="THF_DH/CycHdrlase_cat_dom"/>
</dbReference>
<dbReference type="InterPro" id="IPR020631">
    <property type="entry name" value="THF_DH/CycHdrlase_NAD-bd_dom"/>
</dbReference>
<dbReference type="PANTHER" id="PTHR48099:SF5">
    <property type="entry name" value="C-1-TETRAHYDROFOLATE SYNTHASE, CYTOPLASMIC"/>
    <property type="match status" value="1"/>
</dbReference>
<dbReference type="PANTHER" id="PTHR48099">
    <property type="entry name" value="C-1-TETRAHYDROFOLATE SYNTHASE, CYTOPLASMIC-RELATED"/>
    <property type="match status" value="1"/>
</dbReference>
<dbReference type="Pfam" id="PF00763">
    <property type="entry name" value="THF_DHG_CYH"/>
    <property type="match status" value="1"/>
</dbReference>
<dbReference type="Pfam" id="PF02882">
    <property type="entry name" value="THF_DHG_CYH_C"/>
    <property type="match status" value="1"/>
</dbReference>
<dbReference type="PRINTS" id="PR00085">
    <property type="entry name" value="THFDHDRGNASE"/>
</dbReference>
<dbReference type="SUPFAM" id="SSF53223">
    <property type="entry name" value="Aminoacid dehydrogenase-like, N-terminal domain"/>
    <property type="match status" value="1"/>
</dbReference>
<dbReference type="SUPFAM" id="SSF51735">
    <property type="entry name" value="NAD(P)-binding Rossmann-fold domains"/>
    <property type="match status" value="1"/>
</dbReference>
<reference key="1">
    <citation type="submission" date="2006-06" db="EMBL/GenBank/DDBJ databases">
        <title>Complete sequence of Rubrobacter xylanophilus DSM 9941.</title>
        <authorList>
            <consortium name="US DOE Joint Genome Institute"/>
            <person name="Copeland A."/>
            <person name="Lucas S."/>
            <person name="Lapidus A."/>
            <person name="Barry K."/>
            <person name="Detter J.C."/>
            <person name="Glavina del Rio T."/>
            <person name="Hammon N."/>
            <person name="Israni S."/>
            <person name="Dalin E."/>
            <person name="Tice H."/>
            <person name="Pitluck S."/>
            <person name="Munk A.C."/>
            <person name="Brettin T."/>
            <person name="Bruce D."/>
            <person name="Han C."/>
            <person name="Tapia R."/>
            <person name="Gilna P."/>
            <person name="Schmutz J."/>
            <person name="Larimer F."/>
            <person name="Land M."/>
            <person name="Hauser L."/>
            <person name="Kyrpides N."/>
            <person name="Lykidis A."/>
            <person name="da Costa M.S."/>
            <person name="Rainey F.A."/>
            <person name="Empadinhas N."/>
            <person name="Jolivet E."/>
            <person name="Battista J.R."/>
            <person name="Richardson P."/>
        </authorList>
    </citation>
    <scope>NUCLEOTIDE SEQUENCE [LARGE SCALE GENOMIC DNA]</scope>
    <source>
        <strain>DSM 9941 / JCM 11954 / NBRC 16129 / PRD-1</strain>
    </source>
</reference>
<name>FOLD3_RUBXD</name>
<gene>
    <name evidence="1" type="primary">folD3</name>
    <name type="ordered locus">Rxyl_2517</name>
</gene>
<comment type="function">
    <text evidence="1">Catalyzes the oxidation of 5,10-methylenetetrahydrofolate to 5,10-methenyltetrahydrofolate and then the hydrolysis of 5,10-methenyltetrahydrofolate to 10-formyltetrahydrofolate.</text>
</comment>
<comment type="catalytic activity">
    <reaction evidence="1">
        <text>(6R)-5,10-methylene-5,6,7,8-tetrahydrofolate + NADP(+) = (6R)-5,10-methenyltetrahydrofolate + NADPH</text>
        <dbReference type="Rhea" id="RHEA:22812"/>
        <dbReference type="ChEBI" id="CHEBI:15636"/>
        <dbReference type="ChEBI" id="CHEBI:57455"/>
        <dbReference type="ChEBI" id="CHEBI:57783"/>
        <dbReference type="ChEBI" id="CHEBI:58349"/>
        <dbReference type="EC" id="1.5.1.5"/>
    </reaction>
</comment>
<comment type="catalytic activity">
    <reaction evidence="1">
        <text>(6R)-5,10-methenyltetrahydrofolate + H2O = (6R)-10-formyltetrahydrofolate + H(+)</text>
        <dbReference type="Rhea" id="RHEA:23700"/>
        <dbReference type="ChEBI" id="CHEBI:15377"/>
        <dbReference type="ChEBI" id="CHEBI:15378"/>
        <dbReference type="ChEBI" id="CHEBI:57455"/>
        <dbReference type="ChEBI" id="CHEBI:195366"/>
        <dbReference type="EC" id="3.5.4.9"/>
    </reaction>
</comment>
<comment type="pathway">
    <text evidence="1">One-carbon metabolism; tetrahydrofolate interconversion.</text>
</comment>
<comment type="subunit">
    <text evidence="1">Homodimer.</text>
</comment>
<comment type="similarity">
    <text evidence="1">Belongs to the tetrahydrofolate dehydrogenase/cyclohydrolase family.</text>
</comment>
<keyword id="KW-0028">Amino-acid biosynthesis</keyword>
<keyword id="KW-0368">Histidine biosynthesis</keyword>
<keyword id="KW-0378">Hydrolase</keyword>
<keyword id="KW-0486">Methionine biosynthesis</keyword>
<keyword id="KW-0511">Multifunctional enzyme</keyword>
<keyword id="KW-0521">NADP</keyword>
<keyword id="KW-0554">One-carbon metabolism</keyword>
<keyword id="KW-0560">Oxidoreductase</keyword>
<keyword id="KW-0658">Purine biosynthesis</keyword>
<keyword id="KW-1185">Reference proteome</keyword>
<organism>
    <name type="scientific">Rubrobacter xylanophilus (strain DSM 9941 / JCM 11954 / NBRC 16129 / PRD-1)</name>
    <dbReference type="NCBI Taxonomy" id="266117"/>
    <lineage>
        <taxon>Bacteria</taxon>
        <taxon>Bacillati</taxon>
        <taxon>Actinomycetota</taxon>
        <taxon>Rubrobacteria</taxon>
        <taxon>Rubrobacterales</taxon>
        <taxon>Rubrobacteraceae</taxon>
        <taxon>Rubrobacter</taxon>
    </lineage>
</organism>
<accession>Q1AT41</accession>
<feature type="chain" id="PRO_0000268487" description="Bifunctional protein FolD 3">
    <location>
        <begin position="1"/>
        <end position="318"/>
    </location>
</feature>
<feature type="binding site" evidence="1">
    <location>
        <begin position="173"/>
        <end position="175"/>
    </location>
    <ligand>
        <name>NADP(+)</name>
        <dbReference type="ChEBI" id="CHEBI:58349"/>
    </ligand>
</feature>
<feature type="binding site" evidence="1">
    <location>
        <position position="242"/>
    </location>
    <ligand>
        <name>NADP(+)</name>
        <dbReference type="ChEBI" id="CHEBI:58349"/>
    </ligand>
</feature>
<protein>
    <recommendedName>
        <fullName evidence="1">Bifunctional protein FolD 3</fullName>
    </recommendedName>
    <domain>
        <recommendedName>
            <fullName evidence="1">Methylenetetrahydrofolate dehydrogenase</fullName>
            <ecNumber evidence="1">1.5.1.5</ecNumber>
        </recommendedName>
    </domain>
    <domain>
        <recommendedName>
            <fullName evidence="1">Methenyltetrahydrofolate cyclohydrolase</fullName>
            <ecNumber evidence="1">3.5.4.9</ecNumber>
        </recommendedName>
    </domain>
</protein>
<sequence length="318" mass="33254">MGARVIDGRPIAGELKKRVASEVEGLAARGVRPGLATVLVGEDYAARAYERRVGGLAAELGCRYVCERLPREAEEADVLAVVGKLNADPRVSGILVLRPLPGHISEPAVFSALDPLKDIEAVHPVNAGLLALGRPRYVPSTPAACFYLLDRYLERSGRPPEEFYPRSTVVVVGRSNNVGKPAVSLGFARGAAVISCDANAYRAGRLREHTLKADALIVAAGVAGLIDESYVREGVIAVDVGINPVADPGGSGRTLLVGDLDFGSVARKAEALTPVPGGVGPITDVWLLKNTVAAGRGLASQAKARCLLRGSHAHSSLI</sequence>
<proteinExistence type="inferred from homology"/>